<sequence length="172" mass="18866">MMSNYLSQLISQHKDFPKKGIVFKDVLPLLQHPNELEGLIQGMSTGQIFESSDAIVSIDARGFIFGTAISMKLSKPMIVARKPGKLPGELITHSYELEYGQNSLSIQKKAIENYQSFVIVDDLLATGGTAMCVSEMLKEAGKDITGLSVVVELGQLNARAYLPFPVESQIIF</sequence>
<gene>
    <name evidence="1" type="primary">apt</name>
    <name type="ordered locus">P9211_14741</name>
</gene>
<protein>
    <recommendedName>
        <fullName evidence="1">Adenine phosphoribosyltransferase</fullName>
        <shortName evidence="1">APRT</shortName>
        <ecNumber evidence="1">2.4.2.7</ecNumber>
    </recommendedName>
</protein>
<name>APT_PROM4</name>
<accession>A9BC43</accession>
<evidence type="ECO:0000255" key="1">
    <source>
        <dbReference type="HAMAP-Rule" id="MF_00004"/>
    </source>
</evidence>
<reference key="1">
    <citation type="journal article" date="2007" name="PLoS Genet.">
        <title>Patterns and implications of gene gain and loss in the evolution of Prochlorococcus.</title>
        <authorList>
            <person name="Kettler G.C."/>
            <person name="Martiny A.C."/>
            <person name="Huang K."/>
            <person name="Zucker J."/>
            <person name="Coleman M.L."/>
            <person name="Rodrigue S."/>
            <person name="Chen F."/>
            <person name="Lapidus A."/>
            <person name="Ferriera S."/>
            <person name="Johnson J."/>
            <person name="Steglich C."/>
            <person name="Church G.M."/>
            <person name="Richardson P."/>
            <person name="Chisholm S.W."/>
        </authorList>
    </citation>
    <scope>NUCLEOTIDE SEQUENCE [LARGE SCALE GENOMIC DNA]</scope>
    <source>
        <strain>MIT 9211</strain>
    </source>
</reference>
<comment type="function">
    <text evidence="1">Catalyzes a salvage reaction resulting in the formation of AMP, that is energically less costly than de novo synthesis.</text>
</comment>
<comment type="catalytic activity">
    <reaction evidence="1">
        <text>AMP + diphosphate = 5-phospho-alpha-D-ribose 1-diphosphate + adenine</text>
        <dbReference type="Rhea" id="RHEA:16609"/>
        <dbReference type="ChEBI" id="CHEBI:16708"/>
        <dbReference type="ChEBI" id="CHEBI:33019"/>
        <dbReference type="ChEBI" id="CHEBI:58017"/>
        <dbReference type="ChEBI" id="CHEBI:456215"/>
        <dbReference type="EC" id="2.4.2.7"/>
    </reaction>
</comment>
<comment type="pathway">
    <text evidence="1">Purine metabolism; AMP biosynthesis via salvage pathway; AMP from adenine: step 1/1.</text>
</comment>
<comment type="subunit">
    <text evidence="1">Homodimer.</text>
</comment>
<comment type="subcellular location">
    <subcellularLocation>
        <location evidence="1">Cytoplasm</location>
    </subcellularLocation>
</comment>
<comment type="similarity">
    <text evidence="1">Belongs to the purine/pyrimidine phosphoribosyltransferase family.</text>
</comment>
<proteinExistence type="inferred from homology"/>
<organism>
    <name type="scientific">Prochlorococcus marinus (strain MIT 9211)</name>
    <dbReference type="NCBI Taxonomy" id="93059"/>
    <lineage>
        <taxon>Bacteria</taxon>
        <taxon>Bacillati</taxon>
        <taxon>Cyanobacteriota</taxon>
        <taxon>Cyanophyceae</taxon>
        <taxon>Synechococcales</taxon>
        <taxon>Prochlorococcaceae</taxon>
        <taxon>Prochlorococcus</taxon>
    </lineage>
</organism>
<feature type="chain" id="PRO_1000088992" description="Adenine phosphoribosyltransferase">
    <location>
        <begin position="1"/>
        <end position="172"/>
    </location>
</feature>
<dbReference type="EC" id="2.4.2.7" evidence="1"/>
<dbReference type="EMBL" id="CP000878">
    <property type="protein sequence ID" value="ABX09405.1"/>
    <property type="molecule type" value="Genomic_DNA"/>
</dbReference>
<dbReference type="RefSeq" id="WP_012196026.1">
    <property type="nucleotide sequence ID" value="NC_009976.1"/>
</dbReference>
<dbReference type="SMR" id="A9BC43"/>
<dbReference type="STRING" id="93059.P9211_14741"/>
<dbReference type="KEGG" id="pmj:P9211_14741"/>
<dbReference type="eggNOG" id="COG0503">
    <property type="taxonomic scope" value="Bacteria"/>
</dbReference>
<dbReference type="HOGENOM" id="CLU_063339_3_3_3"/>
<dbReference type="OrthoDB" id="9803963at2"/>
<dbReference type="UniPathway" id="UPA00588">
    <property type="reaction ID" value="UER00646"/>
</dbReference>
<dbReference type="Proteomes" id="UP000000788">
    <property type="component" value="Chromosome"/>
</dbReference>
<dbReference type="GO" id="GO:0005737">
    <property type="term" value="C:cytoplasm"/>
    <property type="evidence" value="ECO:0007669"/>
    <property type="project" value="UniProtKB-SubCell"/>
</dbReference>
<dbReference type="GO" id="GO:0002055">
    <property type="term" value="F:adenine binding"/>
    <property type="evidence" value="ECO:0007669"/>
    <property type="project" value="TreeGrafter"/>
</dbReference>
<dbReference type="GO" id="GO:0003999">
    <property type="term" value="F:adenine phosphoribosyltransferase activity"/>
    <property type="evidence" value="ECO:0007669"/>
    <property type="project" value="UniProtKB-UniRule"/>
</dbReference>
<dbReference type="GO" id="GO:0016208">
    <property type="term" value="F:AMP binding"/>
    <property type="evidence" value="ECO:0007669"/>
    <property type="project" value="TreeGrafter"/>
</dbReference>
<dbReference type="GO" id="GO:0006168">
    <property type="term" value="P:adenine salvage"/>
    <property type="evidence" value="ECO:0007669"/>
    <property type="project" value="InterPro"/>
</dbReference>
<dbReference type="GO" id="GO:0044209">
    <property type="term" value="P:AMP salvage"/>
    <property type="evidence" value="ECO:0007669"/>
    <property type="project" value="UniProtKB-UniRule"/>
</dbReference>
<dbReference type="GO" id="GO:0006166">
    <property type="term" value="P:purine ribonucleoside salvage"/>
    <property type="evidence" value="ECO:0007669"/>
    <property type="project" value="UniProtKB-KW"/>
</dbReference>
<dbReference type="CDD" id="cd06223">
    <property type="entry name" value="PRTases_typeI"/>
    <property type="match status" value="1"/>
</dbReference>
<dbReference type="FunFam" id="3.40.50.2020:FF:000004">
    <property type="entry name" value="Adenine phosphoribosyltransferase"/>
    <property type="match status" value="1"/>
</dbReference>
<dbReference type="Gene3D" id="3.40.50.2020">
    <property type="match status" value="1"/>
</dbReference>
<dbReference type="HAMAP" id="MF_00004">
    <property type="entry name" value="Aden_phosphoribosyltr"/>
    <property type="match status" value="1"/>
</dbReference>
<dbReference type="InterPro" id="IPR005764">
    <property type="entry name" value="Ade_phspho_trans"/>
</dbReference>
<dbReference type="InterPro" id="IPR000836">
    <property type="entry name" value="PRibTrfase_dom"/>
</dbReference>
<dbReference type="InterPro" id="IPR029057">
    <property type="entry name" value="PRTase-like"/>
</dbReference>
<dbReference type="InterPro" id="IPR050054">
    <property type="entry name" value="UPRTase/APRTase"/>
</dbReference>
<dbReference type="NCBIfam" id="NF002636">
    <property type="entry name" value="PRK02304.1-5"/>
    <property type="match status" value="1"/>
</dbReference>
<dbReference type="PANTHER" id="PTHR32315">
    <property type="entry name" value="ADENINE PHOSPHORIBOSYLTRANSFERASE"/>
    <property type="match status" value="1"/>
</dbReference>
<dbReference type="PANTHER" id="PTHR32315:SF3">
    <property type="entry name" value="ADENINE PHOSPHORIBOSYLTRANSFERASE"/>
    <property type="match status" value="1"/>
</dbReference>
<dbReference type="Pfam" id="PF00156">
    <property type="entry name" value="Pribosyltran"/>
    <property type="match status" value="1"/>
</dbReference>
<dbReference type="SUPFAM" id="SSF53271">
    <property type="entry name" value="PRTase-like"/>
    <property type="match status" value="1"/>
</dbReference>
<dbReference type="PROSITE" id="PS00103">
    <property type="entry name" value="PUR_PYR_PR_TRANSFER"/>
    <property type="match status" value="1"/>
</dbReference>
<keyword id="KW-0963">Cytoplasm</keyword>
<keyword id="KW-0328">Glycosyltransferase</keyword>
<keyword id="KW-0660">Purine salvage</keyword>
<keyword id="KW-1185">Reference proteome</keyword>
<keyword id="KW-0808">Transferase</keyword>